<reference key="1">
    <citation type="journal article" date="2008" name="BMC Genomics">
        <title>The missing link: Bordetella petrii is endowed with both the metabolic versatility of environmental bacteria and virulence traits of pathogenic Bordetellae.</title>
        <authorList>
            <person name="Gross R."/>
            <person name="Guzman C.A."/>
            <person name="Sebaihia M."/>
            <person name="Martin dos Santos V.A.P."/>
            <person name="Pieper D.H."/>
            <person name="Koebnik R."/>
            <person name="Lechner M."/>
            <person name="Bartels D."/>
            <person name="Buhrmester J."/>
            <person name="Choudhuri J.V."/>
            <person name="Ebensen T."/>
            <person name="Gaigalat L."/>
            <person name="Herrmann S."/>
            <person name="Khachane A.N."/>
            <person name="Larisch C."/>
            <person name="Link S."/>
            <person name="Linke B."/>
            <person name="Meyer F."/>
            <person name="Mormann S."/>
            <person name="Nakunst D."/>
            <person name="Rueckert C."/>
            <person name="Schneiker-Bekel S."/>
            <person name="Schulze K."/>
            <person name="Voerholter F.-J."/>
            <person name="Yevsa T."/>
            <person name="Engle J.T."/>
            <person name="Goldman W.E."/>
            <person name="Puehler A."/>
            <person name="Goebel U.B."/>
            <person name="Goesmann A."/>
            <person name="Bloecker H."/>
            <person name="Kaiser O."/>
            <person name="Martinez-Arias R."/>
        </authorList>
    </citation>
    <scope>NUCLEOTIDE SEQUENCE [LARGE SCALE GENOMIC DNA]</scope>
    <source>
        <strain>ATCC BAA-461 / DSM 12804 / CCUG 43448</strain>
    </source>
</reference>
<sequence>MKSSEIRQKFLQFFQSKGHTIVPSASLVPGNDPTLLFTNSGMVQFKDVFTGKETRSYTRATSSQRSVRAGGKHNDLENVGYTARHHTFFEMLGNFSFGDYFKRDAIQYAWELLTQVYKLPAEKLWVTVYQEDDQAYDIWATEVGVPRERIIRIGDNKGSRYASDNFWQMADTGPCGPCSEIFYDHGPDVWGGPPGSPEEDGDRYIEIWNLVFMQFERDAAGNMTPLPKPCVDTGMGLERIAAVLQGVHSNYEIDLFQNLIRAAARETGVTNLEDNSLKVIADHIRACAFLIVDGVIPSNEGRGYVLRRIVRRALRHGYKLGQTKPFFYKLVPDLVAEMGQAYPELTQAAERVAQVLKQEEERFGETLEHGMKILDGALAGVPAGGQLDGTTLFTLYDTYGFPVDLTADICRERNVEVDMAGFDAAMARQRDQARAAGKFKMAEGLSYEGADTRFEGYEKLELDGVKVAALYVDGTQVERVQAGQHAVVVLDATPFYAESGGQVGDTGLLESGGARFAVADTLKIQAGVFGHHGVLESGSLAVGDTLLARVDAVRRARTVRNHSATHLMHKALRQVLGAHVQQRGSLVDPDKTRFDFAHDAPLSAEQIAQVEAIVNAEVLANQPTQARVMAYDDAVKGGAMALFGEKYGDTVRVLDIGFSRELCGGTHVSRTGDIGLFKIVAEGGVAAGVRRVEAITGDNALAWVQNQNALLLRAAGMLRTTPADLPERLAQVQEQLRTLEKDLEQARGKLAASAGNDLAAKAAEVKGVKVLAASLGDIDPKALRGMVDNLKDRLKSAVVLLASAGGDGKISLVGGVTADLTGRVKAGDLVGFVAGQVGGKGGGRPDMAMGGGNDAQALPAAVASVQGWVDERL</sequence>
<keyword id="KW-0030">Aminoacyl-tRNA synthetase</keyword>
<keyword id="KW-0067">ATP-binding</keyword>
<keyword id="KW-0963">Cytoplasm</keyword>
<keyword id="KW-0436">Ligase</keyword>
<keyword id="KW-0479">Metal-binding</keyword>
<keyword id="KW-0547">Nucleotide-binding</keyword>
<keyword id="KW-0648">Protein biosynthesis</keyword>
<keyword id="KW-0694">RNA-binding</keyword>
<keyword id="KW-0820">tRNA-binding</keyword>
<keyword id="KW-0862">Zinc</keyword>
<feature type="chain" id="PRO_0000347509" description="Alanine--tRNA ligase">
    <location>
        <begin position="1"/>
        <end position="873"/>
    </location>
</feature>
<feature type="binding site" evidence="1">
    <location>
        <position position="562"/>
    </location>
    <ligand>
        <name>Zn(2+)</name>
        <dbReference type="ChEBI" id="CHEBI:29105"/>
    </ligand>
</feature>
<feature type="binding site" evidence="1">
    <location>
        <position position="566"/>
    </location>
    <ligand>
        <name>Zn(2+)</name>
        <dbReference type="ChEBI" id="CHEBI:29105"/>
    </ligand>
</feature>
<feature type="binding site" evidence="1">
    <location>
        <position position="663"/>
    </location>
    <ligand>
        <name>Zn(2+)</name>
        <dbReference type="ChEBI" id="CHEBI:29105"/>
    </ligand>
</feature>
<feature type="binding site" evidence="1">
    <location>
        <position position="667"/>
    </location>
    <ligand>
        <name>Zn(2+)</name>
        <dbReference type="ChEBI" id="CHEBI:29105"/>
    </ligand>
</feature>
<comment type="function">
    <text evidence="1">Catalyzes the attachment of alanine to tRNA(Ala) in a two-step reaction: alanine is first activated by ATP to form Ala-AMP and then transferred to the acceptor end of tRNA(Ala). Also edits incorrectly charged Ser-tRNA(Ala) and Gly-tRNA(Ala) via its editing domain.</text>
</comment>
<comment type="catalytic activity">
    <reaction evidence="1">
        <text>tRNA(Ala) + L-alanine + ATP = L-alanyl-tRNA(Ala) + AMP + diphosphate</text>
        <dbReference type="Rhea" id="RHEA:12540"/>
        <dbReference type="Rhea" id="RHEA-COMP:9657"/>
        <dbReference type="Rhea" id="RHEA-COMP:9923"/>
        <dbReference type="ChEBI" id="CHEBI:30616"/>
        <dbReference type="ChEBI" id="CHEBI:33019"/>
        <dbReference type="ChEBI" id="CHEBI:57972"/>
        <dbReference type="ChEBI" id="CHEBI:78442"/>
        <dbReference type="ChEBI" id="CHEBI:78497"/>
        <dbReference type="ChEBI" id="CHEBI:456215"/>
        <dbReference type="EC" id="6.1.1.7"/>
    </reaction>
</comment>
<comment type="cofactor">
    <cofactor evidence="1">
        <name>Zn(2+)</name>
        <dbReference type="ChEBI" id="CHEBI:29105"/>
    </cofactor>
    <text evidence="1">Binds 1 zinc ion per subunit.</text>
</comment>
<comment type="subcellular location">
    <subcellularLocation>
        <location evidence="1">Cytoplasm</location>
    </subcellularLocation>
</comment>
<comment type="domain">
    <text evidence="1">Consists of three domains; the N-terminal catalytic domain, the editing domain and the C-terminal C-Ala domain. The editing domain removes incorrectly charged amino acids, while the C-Ala domain, along with tRNA(Ala), serves as a bridge to cooperatively bring together the editing and aminoacylation centers thus stimulating deacylation of misacylated tRNAs.</text>
</comment>
<comment type="similarity">
    <text evidence="1">Belongs to the class-II aminoacyl-tRNA synthetase family.</text>
</comment>
<evidence type="ECO:0000255" key="1">
    <source>
        <dbReference type="HAMAP-Rule" id="MF_00036"/>
    </source>
</evidence>
<name>SYA_BORPD</name>
<protein>
    <recommendedName>
        <fullName evidence="1">Alanine--tRNA ligase</fullName>
        <ecNumber evidence="1">6.1.1.7</ecNumber>
    </recommendedName>
    <alternativeName>
        <fullName evidence="1">Alanyl-tRNA synthetase</fullName>
        <shortName evidence="1">AlaRS</shortName>
    </alternativeName>
</protein>
<proteinExistence type="inferred from homology"/>
<organism>
    <name type="scientific">Bordetella petrii (strain ATCC BAA-461 / DSM 12804 / CCUG 43448)</name>
    <dbReference type="NCBI Taxonomy" id="340100"/>
    <lineage>
        <taxon>Bacteria</taxon>
        <taxon>Pseudomonadati</taxon>
        <taxon>Pseudomonadota</taxon>
        <taxon>Betaproteobacteria</taxon>
        <taxon>Burkholderiales</taxon>
        <taxon>Alcaligenaceae</taxon>
        <taxon>Bordetella</taxon>
    </lineage>
</organism>
<gene>
    <name evidence="1" type="primary">alaS</name>
    <name type="ordered locus">Bpet2002</name>
</gene>
<accession>A9IK31</accession>
<dbReference type="EC" id="6.1.1.7" evidence="1"/>
<dbReference type="EMBL" id="AM902716">
    <property type="protein sequence ID" value="CAP42342.1"/>
    <property type="molecule type" value="Genomic_DNA"/>
</dbReference>
<dbReference type="SMR" id="A9IK31"/>
<dbReference type="STRING" id="94624.Bpet2002"/>
<dbReference type="KEGG" id="bpt:Bpet2002"/>
<dbReference type="eggNOG" id="COG0013">
    <property type="taxonomic scope" value="Bacteria"/>
</dbReference>
<dbReference type="Proteomes" id="UP000001225">
    <property type="component" value="Chromosome"/>
</dbReference>
<dbReference type="GO" id="GO:0005829">
    <property type="term" value="C:cytosol"/>
    <property type="evidence" value="ECO:0007669"/>
    <property type="project" value="TreeGrafter"/>
</dbReference>
<dbReference type="GO" id="GO:0004813">
    <property type="term" value="F:alanine-tRNA ligase activity"/>
    <property type="evidence" value="ECO:0007669"/>
    <property type="project" value="UniProtKB-UniRule"/>
</dbReference>
<dbReference type="GO" id="GO:0002161">
    <property type="term" value="F:aminoacyl-tRNA deacylase activity"/>
    <property type="evidence" value="ECO:0007669"/>
    <property type="project" value="TreeGrafter"/>
</dbReference>
<dbReference type="GO" id="GO:0005524">
    <property type="term" value="F:ATP binding"/>
    <property type="evidence" value="ECO:0007669"/>
    <property type="project" value="UniProtKB-UniRule"/>
</dbReference>
<dbReference type="GO" id="GO:0000049">
    <property type="term" value="F:tRNA binding"/>
    <property type="evidence" value="ECO:0007669"/>
    <property type="project" value="UniProtKB-KW"/>
</dbReference>
<dbReference type="GO" id="GO:0008270">
    <property type="term" value="F:zinc ion binding"/>
    <property type="evidence" value="ECO:0007669"/>
    <property type="project" value="UniProtKB-UniRule"/>
</dbReference>
<dbReference type="GO" id="GO:0006419">
    <property type="term" value="P:alanyl-tRNA aminoacylation"/>
    <property type="evidence" value="ECO:0007669"/>
    <property type="project" value="UniProtKB-UniRule"/>
</dbReference>
<dbReference type="GO" id="GO:0045892">
    <property type="term" value="P:negative regulation of DNA-templated transcription"/>
    <property type="evidence" value="ECO:0007669"/>
    <property type="project" value="TreeGrafter"/>
</dbReference>
<dbReference type="CDD" id="cd00673">
    <property type="entry name" value="AlaRS_core"/>
    <property type="match status" value="1"/>
</dbReference>
<dbReference type="FunFam" id="2.40.30.130:FF:000001">
    <property type="entry name" value="Alanine--tRNA ligase"/>
    <property type="match status" value="1"/>
</dbReference>
<dbReference type="FunFam" id="3.10.310.40:FF:000001">
    <property type="entry name" value="Alanine--tRNA ligase"/>
    <property type="match status" value="1"/>
</dbReference>
<dbReference type="FunFam" id="3.30.54.20:FF:000001">
    <property type="entry name" value="Alanine--tRNA ligase"/>
    <property type="match status" value="1"/>
</dbReference>
<dbReference type="FunFam" id="3.30.930.10:FF:000004">
    <property type="entry name" value="Alanine--tRNA ligase"/>
    <property type="match status" value="1"/>
</dbReference>
<dbReference type="FunFam" id="3.30.980.10:FF:000004">
    <property type="entry name" value="Alanine--tRNA ligase, cytoplasmic"/>
    <property type="match status" value="1"/>
</dbReference>
<dbReference type="Gene3D" id="2.40.30.130">
    <property type="match status" value="1"/>
</dbReference>
<dbReference type="Gene3D" id="3.10.310.40">
    <property type="match status" value="1"/>
</dbReference>
<dbReference type="Gene3D" id="3.30.54.20">
    <property type="match status" value="1"/>
</dbReference>
<dbReference type="Gene3D" id="6.10.250.550">
    <property type="match status" value="1"/>
</dbReference>
<dbReference type="Gene3D" id="3.30.930.10">
    <property type="entry name" value="Bira Bifunctional Protein, Domain 2"/>
    <property type="match status" value="1"/>
</dbReference>
<dbReference type="Gene3D" id="3.30.980.10">
    <property type="entry name" value="Threonyl-trna Synthetase, Chain A, domain 2"/>
    <property type="match status" value="1"/>
</dbReference>
<dbReference type="HAMAP" id="MF_00036_B">
    <property type="entry name" value="Ala_tRNA_synth_B"/>
    <property type="match status" value="1"/>
</dbReference>
<dbReference type="InterPro" id="IPR045864">
    <property type="entry name" value="aa-tRNA-synth_II/BPL/LPL"/>
</dbReference>
<dbReference type="InterPro" id="IPR002318">
    <property type="entry name" value="Ala-tRNA-lgiase_IIc"/>
</dbReference>
<dbReference type="InterPro" id="IPR018162">
    <property type="entry name" value="Ala-tRNA-ligase_IIc_anticod-bd"/>
</dbReference>
<dbReference type="InterPro" id="IPR018165">
    <property type="entry name" value="Ala-tRNA-synth_IIc_core"/>
</dbReference>
<dbReference type="InterPro" id="IPR018164">
    <property type="entry name" value="Ala-tRNA-synth_IIc_N"/>
</dbReference>
<dbReference type="InterPro" id="IPR050058">
    <property type="entry name" value="Ala-tRNA_ligase"/>
</dbReference>
<dbReference type="InterPro" id="IPR023033">
    <property type="entry name" value="Ala_tRNA_ligase_euk/bac"/>
</dbReference>
<dbReference type="InterPro" id="IPR003156">
    <property type="entry name" value="DHHA1_dom"/>
</dbReference>
<dbReference type="InterPro" id="IPR018163">
    <property type="entry name" value="Thr/Ala-tRNA-synth_IIc_edit"/>
</dbReference>
<dbReference type="InterPro" id="IPR009000">
    <property type="entry name" value="Transl_B-barrel_sf"/>
</dbReference>
<dbReference type="InterPro" id="IPR012947">
    <property type="entry name" value="tRNA_SAD"/>
</dbReference>
<dbReference type="NCBIfam" id="TIGR00344">
    <property type="entry name" value="alaS"/>
    <property type="match status" value="1"/>
</dbReference>
<dbReference type="PANTHER" id="PTHR11777:SF9">
    <property type="entry name" value="ALANINE--TRNA LIGASE, CYTOPLASMIC"/>
    <property type="match status" value="1"/>
</dbReference>
<dbReference type="PANTHER" id="PTHR11777">
    <property type="entry name" value="ALANYL-TRNA SYNTHETASE"/>
    <property type="match status" value="1"/>
</dbReference>
<dbReference type="Pfam" id="PF02272">
    <property type="entry name" value="DHHA1"/>
    <property type="match status" value="1"/>
</dbReference>
<dbReference type="Pfam" id="PF01411">
    <property type="entry name" value="tRNA-synt_2c"/>
    <property type="match status" value="1"/>
</dbReference>
<dbReference type="Pfam" id="PF07973">
    <property type="entry name" value="tRNA_SAD"/>
    <property type="match status" value="1"/>
</dbReference>
<dbReference type="PRINTS" id="PR00980">
    <property type="entry name" value="TRNASYNTHALA"/>
</dbReference>
<dbReference type="SMART" id="SM00863">
    <property type="entry name" value="tRNA_SAD"/>
    <property type="match status" value="1"/>
</dbReference>
<dbReference type="SUPFAM" id="SSF55681">
    <property type="entry name" value="Class II aaRS and biotin synthetases"/>
    <property type="match status" value="1"/>
</dbReference>
<dbReference type="SUPFAM" id="SSF101353">
    <property type="entry name" value="Putative anticodon-binding domain of alanyl-tRNA synthetase (AlaRS)"/>
    <property type="match status" value="1"/>
</dbReference>
<dbReference type="SUPFAM" id="SSF55186">
    <property type="entry name" value="ThrRS/AlaRS common domain"/>
    <property type="match status" value="1"/>
</dbReference>
<dbReference type="SUPFAM" id="SSF50447">
    <property type="entry name" value="Translation proteins"/>
    <property type="match status" value="1"/>
</dbReference>
<dbReference type="PROSITE" id="PS50860">
    <property type="entry name" value="AA_TRNA_LIGASE_II_ALA"/>
    <property type="match status" value="1"/>
</dbReference>